<gene>
    <name type="primary">VSTM4</name>
    <name type="synonym">C10orf72</name>
</gene>
<dbReference type="EMBL" id="AK056299">
    <property type="protein sequence ID" value="BAB71142.1"/>
    <property type="molecule type" value="mRNA"/>
</dbReference>
<dbReference type="EMBL" id="AK297931">
    <property type="protein sequence ID" value="BAG60248.1"/>
    <property type="molecule type" value="mRNA"/>
</dbReference>
<dbReference type="EMBL" id="AC060234">
    <property type="status" value="NOT_ANNOTATED_CDS"/>
    <property type="molecule type" value="Genomic_DNA"/>
</dbReference>
<dbReference type="EMBL" id="AC084727">
    <property type="status" value="NOT_ANNOTATED_CDS"/>
    <property type="molecule type" value="Genomic_DNA"/>
</dbReference>
<dbReference type="EMBL" id="BC041414">
    <property type="protein sequence ID" value="AAH41414.1"/>
    <property type="molecule type" value="mRNA"/>
</dbReference>
<dbReference type="CCDS" id="CCDS31198.1">
    <molecule id="Q8IW00-1"/>
</dbReference>
<dbReference type="CCDS" id="CCDS7228.1">
    <molecule id="Q8IW00-2"/>
</dbReference>
<dbReference type="RefSeq" id="NP_001026916.2">
    <molecule id="Q8IW00-1"/>
    <property type="nucleotide sequence ID" value="NM_001031746.5"/>
</dbReference>
<dbReference type="RefSeq" id="NP_659421.1">
    <molecule id="Q8IW00-2"/>
    <property type="nucleotide sequence ID" value="NM_144984.4"/>
</dbReference>
<dbReference type="BioGRID" id="128223">
    <property type="interactions" value="12"/>
</dbReference>
<dbReference type="FunCoup" id="Q8IW00">
    <property type="interactions" value="394"/>
</dbReference>
<dbReference type="IntAct" id="Q8IW00">
    <property type="interactions" value="11"/>
</dbReference>
<dbReference type="STRING" id="9606.ENSP00000331062"/>
<dbReference type="GlyCosmos" id="Q8IW00">
    <property type="glycosylation" value="4 sites, No reported glycans"/>
</dbReference>
<dbReference type="GlyGen" id="Q8IW00">
    <property type="glycosylation" value="6 sites, 2 N-linked glycans (2 sites), 1 O-linked glycan (1 site)"/>
</dbReference>
<dbReference type="iPTMnet" id="Q8IW00"/>
<dbReference type="PhosphoSitePlus" id="Q8IW00"/>
<dbReference type="BioMuta" id="VSTM4"/>
<dbReference type="DMDM" id="334302923"/>
<dbReference type="MassIVE" id="Q8IW00"/>
<dbReference type="PaxDb" id="9606-ENSP00000331062"/>
<dbReference type="PeptideAtlas" id="Q8IW00"/>
<dbReference type="ProteomicsDB" id="70792">
    <molecule id="Q8IW00-1"/>
</dbReference>
<dbReference type="Antibodypedia" id="49933">
    <property type="antibodies" value="57 antibodies from 14 providers"/>
</dbReference>
<dbReference type="DNASU" id="196740"/>
<dbReference type="Ensembl" id="ENST00000298454.3">
    <molecule id="Q8IW00-2"/>
    <property type="protein sequence ID" value="ENSP00000298454.3"/>
    <property type="gene ID" value="ENSG00000165633.13"/>
</dbReference>
<dbReference type="Ensembl" id="ENST00000332853.9">
    <molecule id="Q8IW00-1"/>
    <property type="protein sequence ID" value="ENSP00000331062.3"/>
    <property type="gene ID" value="ENSG00000165633.13"/>
</dbReference>
<dbReference type="GeneID" id="196740"/>
<dbReference type="KEGG" id="hsa:196740"/>
<dbReference type="MANE-Select" id="ENST00000332853.9">
    <property type="protein sequence ID" value="ENSP00000331062.3"/>
    <property type="RefSeq nucleotide sequence ID" value="NM_001031746.5"/>
    <property type="RefSeq protein sequence ID" value="NP_001026916.2"/>
</dbReference>
<dbReference type="UCSC" id="uc001jhf.4">
    <molecule id="Q8IW00-1"/>
    <property type="organism name" value="human"/>
</dbReference>
<dbReference type="AGR" id="HGNC:26470"/>
<dbReference type="CTD" id="196740"/>
<dbReference type="DisGeNET" id="196740"/>
<dbReference type="GeneCards" id="VSTM4"/>
<dbReference type="HGNC" id="HGNC:26470">
    <property type="gene designation" value="VSTM4"/>
</dbReference>
<dbReference type="HPA" id="ENSG00000165633">
    <property type="expression patterns" value="Low tissue specificity"/>
</dbReference>
<dbReference type="neXtProt" id="NX_Q8IW00"/>
<dbReference type="OpenTargets" id="ENSG00000165633"/>
<dbReference type="PharmGKB" id="PA134889917"/>
<dbReference type="VEuPathDB" id="HostDB:ENSG00000165633"/>
<dbReference type="eggNOG" id="ENOG502QUVT">
    <property type="taxonomic scope" value="Eukaryota"/>
</dbReference>
<dbReference type="GeneTree" id="ENSGT00390000008566"/>
<dbReference type="HOGENOM" id="CLU_060467_0_0_1"/>
<dbReference type="InParanoid" id="Q8IW00"/>
<dbReference type="OMA" id="GDFCLAI"/>
<dbReference type="OrthoDB" id="8885867at2759"/>
<dbReference type="PAN-GO" id="Q8IW00">
    <property type="GO annotations" value="1 GO annotation based on evolutionary models"/>
</dbReference>
<dbReference type="PhylomeDB" id="Q8IW00"/>
<dbReference type="TreeFam" id="TF331374"/>
<dbReference type="PathwayCommons" id="Q8IW00"/>
<dbReference type="SignaLink" id="Q8IW00"/>
<dbReference type="BioGRID-ORCS" id="196740">
    <property type="hits" value="7 hits in 1155 CRISPR screens"/>
</dbReference>
<dbReference type="ChiTaRS" id="VSTM4">
    <property type="organism name" value="human"/>
</dbReference>
<dbReference type="GenomeRNAi" id="196740"/>
<dbReference type="Pharos" id="Q8IW00">
    <property type="development level" value="Tdark"/>
</dbReference>
<dbReference type="PRO" id="PR:Q8IW00"/>
<dbReference type="Proteomes" id="UP000005640">
    <property type="component" value="Chromosome 10"/>
</dbReference>
<dbReference type="RNAct" id="Q8IW00">
    <property type="molecule type" value="protein"/>
</dbReference>
<dbReference type="Bgee" id="ENSG00000165633">
    <property type="expression patterns" value="Expressed in left adrenal gland cortex and 173 other cell types or tissues"/>
</dbReference>
<dbReference type="GO" id="GO:0005576">
    <property type="term" value="C:extracellular region"/>
    <property type="evidence" value="ECO:0007669"/>
    <property type="project" value="UniProtKB-SubCell"/>
</dbReference>
<dbReference type="GO" id="GO:0016020">
    <property type="term" value="C:membrane"/>
    <property type="evidence" value="ECO:0000318"/>
    <property type="project" value="GO_Central"/>
</dbReference>
<dbReference type="GO" id="GO:0005886">
    <property type="term" value="C:plasma membrane"/>
    <property type="evidence" value="ECO:0007669"/>
    <property type="project" value="UniProtKB-SubCell"/>
</dbReference>
<dbReference type="GO" id="GO:0043542">
    <property type="term" value="P:endothelial cell migration"/>
    <property type="evidence" value="ECO:0007669"/>
    <property type="project" value="Ensembl"/>
</dbReference>
<dbReference type="GO" id="GO:0001935">
    <property type="term" value="P:endothelial cell proliferation"/>
    <property type="evidence" value="ECO:0007669"/>
    <property type="project" value="Ensembl"/>
</dbReference>
<dbReference type="GO" id="GO:0097601">
    <property type="term" value="P:retina blood vessel maintenance"/>
    <property type="evidence" value="ECO:0007669"/>
    <property type="project" value="Ensembl"/>
</dbReference>
<dbReference type="GO" id="GO:0061298">
    <property type="term" value="P:retina vasculature development in camera-type eye"/>
    <property type="evidence" value="ECO:0007669"/>
    <property type="project" value="Ensembl"/>
</dbReference>
<dbReference type="GO" id="GO:0002040">
    <property type="term" value="P:sprouting angiogenesis"/>
    <property type="evidence" value="ECO:0007669"/>
    <property type="project" value="Ensembl"/>
</dbReference>
<dbReference type="GO" id="GO:0042311">
    <property type="term" value="P:vasodilation"/>
    <property type="evidence" value="ECO:0007669"/>
    <property type="project" value="Ensembl"/>
</dbReference>
<dbReference type="FunFam" id="2.60.40.10:FF:000667">
    <property type="entry name" value="V-set and transmembrane domain containing 4"/>
    <property type="match status" value="1"/>
</dbReference>
<dbReference type="Gene3D" id="2.60.40.10">
    <property type="entry name" value="Immunoglobulins"/>
    <property type="match status" value="1"/>
</dbReference>
<dbReference type="InterPro" id="IPR007110">
    <property type="entry name" value="Ig-like_dom"/>
</dbReference>
<dbReference type="InterPro" id="IPR036179">
    <property type="entry name" value="Ig-like_dom_sf"/>
</dbReference>
<dbReference type="InterPro" id="IPR013783">
    <property type="entry name" value="Ig-like_fold"/>
</dbReference>
<dbReference type="InterPro" id="IPR003599">
    <property type="entry name" value="Ig_sub"/>
</dbReference>
<dbReference type="InterPro" id="IPR013106">
    <property type="entry name" value="Ig_V-set"/>
</dbReference>
<dbReference type="InterPro" id="IPR051102">
    <property type="entry name" value="IgSF_V-set/TM_domain"/>
</dbReference>
<dbReference type="PANTHER" id="PTHR12207">
    <property type="entry name" value="V-SET AND TRANSMEMBRANE DOMAIN-CONTAINING PROTEIN"/>
    <property type="match status" value="1"/>
</dbReference>
<dbReference type="PANTHER" id="PTHR12207:SF8">
    <property type="entry name" value="V-SET AND TRANSMEMBRANE DOMAIN-CONTAINING PROTEIN 4"/>
    <property type="match status" value="1"/>
</dbReference>
<dbReference type="Pfam" id="PF07686">
    <property type="entry name" value="V-set"/>
    <property type="match status" value="1"/>
</dbReference>
<dbReference type="SMART" id="SM00409">
    <property type="entry name" value="IG"/>
    <property type="match status" value="1"/>
</dbReference>
<dbReference type="SUPFAM" id="SSF48726">
    <property type="entry name" value="Immunoglobulin"/>
    <property type="match status" value="1"/>
</dbReference>
<dbReference type="PROSITE" id="PS50835">
    <property type="entry name" value="IG_LIKE"/>
    <property type="match status" value="1"/>
</dbReference>
<reference key="1">
    <citation type="journal article" date="2004" name="Nat. Genet.">
        <title>Complete sequencing and characterization of 21,243 full-length human cDNAs.</title>
        <authorList>
            <person name="Ota T."/>
            <person name="Suzuki Y."/>
            <person name="Nishikawa T."/>
            <person name="Otsuki T."/>
            <person name="Sugiyama T."/>
            <person name="Irie R."/>
            <person name="Wakamatsu A."/>
            <person name="Hayashi K."/>
            <person name="Sato H."/>
            <person name="Nagai K."/>
            <person name="Kimura K."/>
            <person name="Makita H."/>
            <person name="Sekine M."/>
            <person name="Obayashi M."/>
            <person name="Nishi T."/>
            <person name="Shibahara T."/>
            <person name="Tanaka T."/>
            <person name="Ishii S."/>
            <person name="Yamamoto J."/>
            <person name="Saito K."/>
            <person name="Kawai Y."/>
            <person name="Isono Y."/>
            <person name="Nakamura Y."/>
            <person name="Nagahari K."/>
            <person name="Murakami K."/>
            <person name="Yasuda T."/>
            <person name="Iwayanagi T."/>
            <person name="Wagatsuma M."/>
            <person name="Shiratori A."/>
            <person name="Sudo H."/>
            <person name="Hosoiri T."/>
            <person name="Kaku Y."/>
            <person name="Kodaira H."/>
            <person name="Kondo H."/>
            <person name="Sugawara M."/>
            <person name="Takahashi M."/>
            <person name="Kanda K."/>
            <person name="Yokoi T."/>
            <person name="Furuya T."/>
            <person name="Kikkawa E."/>
            <person name="Omura Y."/>
            <person name="Abe K."/>
            <person name="Kamihara K."/>
            <person name="Katsuta N."/>
            <person name="Sato K."/>
            <person name="Tanikawa M."/>
            <person name="Yamazaki M."/>
            <person name="Ninomiya K."/>
            <person name="Ishibashi T."/>
            <person name="Yamashita H."/>
            <person name="Murakawa K."/>
            <person name="Fujimori K."/>
            <person name="Tanai H."/>
            <person name="Kimata M."/>
            <person name="Watanabe M."/>
            <person name="Hiraoka S."/>
            <person name="Chiba Y."/>
            <person name="Ishida S."/>
            <person name="Ono Y."/>
            <person name="Takiguchi S."/>
            <person name="Watanabe S."/>
            <person name="Yosida M."/>
            <person name="Hotuta T."/>
            <person name="Kusano J."/>
            <person name="Kanehori K."/>
            <person name="Takahashi-Fujii A."/>
            <person name="Hara H."/>
            <person name="Tanase T.-O."/>
            <person name="Nomura Y."/>
            <person name="Togiya S."/>
            <person name="Komai F."/>
            <person name="Hara R."/>
            <person name="Takeuchi K."/>
            <person name="Arita M."/>
            <person name="Imose N."/>
            <person name="Musashino K."/>
            <person name="Yuuki H."/>
            <person name="Oshima A."/>
            <person name="Sasaki N."/>
            <person name="Aotsuka S."/>
            <person name="Yoshikawa Y."/>
            <person name="Matsunawa H."/>
            <person name="Ichihara T."/>
            <person name="Shiohata N."/>
            <person name="Sano S."/>
            <person name="Moriya S."/>
            <person name="Momiyama H."/>
            <person name="Satoh N."/>
            <person name="Takami S."/>
            <person name="Terashima Y."/>
            <person name="Suzuki O."/>
            <person name="Nakagawa S."/>
            <person name="Senoh A."/>
            <person name="Mizoguchi H."/>
            <person name="Goto Y."/>
            <person name="Shimizu F."/>
            <person name="Wakebe H."/>
            <person name="Hishigaki H."/>
            <person name="Watanabe T."/>
            <person name="Sugiyama A."/>
            <person name="Takemoto M."/>
            <person name="Kawakami B."/>
            <person name="Yamazaki M."/>
            <person name="Watanabe K."/>
            <person name="Kumagai A."/>
            <person name="Itakura S."/>
            <person name="Fukuzumi Y."/>
            <person name="Fujimori Y."/>
            <person name="Komiyama M."/>
            <person name="Tashiro H."/>
            <person name="Tanigami A."/>
            <person name="Fujiwara T."/>
            <person name="Ono T."/>
            <person name="Yamada K."/>
            <person name="Fujii Y."/>
            <person name="Ozaki K."/>
            <person name="Hirao M."/>
            <person name="Ohmori Y."/>
            <person name="Kawabata A."/>
            <person name="Hikiji T."/>
            <person name="Kobatake N."/>
            <person name="Inagaki H."/>
            <person name="Ikema Y."/>
            <person name="Okamoto S."/>
            <person name="Okitani R."/>
            <person name="Kawakami T."/>
            <person name="Noguchi S."/>
            <person name="Itoh T."/>
            <person name="Shigeta K."/>
            <person name="Senba T."/>
            <person name="Matsumura K."/>
            <person name="Nakajima Y."/>
            <person name="Mizuno T."/>
            <person name="Morinaga M."/>
            <person name="Sasaki M."/>
            <person name="Togashi T."/>
            <person name="Oyama M."/>
            <person name="Hata H."/>
            <person name="Watanabe M."/>
            <person name="Komatsu T."/>
            <person name="Mizushima-Sugano J."/>
            <person name="Satoh T."/>
            <person name="Shirai Y."/>
            <person name="Takahashi Y."/>
            <person name="Nakagawa K."/>
            <person name="Okumura K."/>
            <person name="Nagase T."/>
            <person name="Nomura N."/>
            <person name="Kikuchi H."/>
            <person name="Masuho Y."/>
            <person name="Yamashita R."/>
            <person name="Nakai K."/>
            <person name="Yada T."/>
            <person name="Nakamura Y."/>
            <person name="Ohara O."/>
            <person name="Isogai T."/>
            <person name="Sugano S."/>
        </authorList>
    </citation>
    <scope>NUCLEOTIDE SEQUENCE [LARGE SCALE MRNA] (ISOFORMS 1 AND 2)</scope>
    <scope>VARIANT SER-68</scope>
</reference>
<reference key="2">
    <citation type="journal article" date="2004" name="Nature">
        <title>The DNA sequence and comparative analysis of human chromosome 10.</title>
        <authorList>
            <person name="Deloukas P."/>
            <person name="Earthrowl M.E."/>
            <person name="Grafham D.V."/>
            <person name="Rubenfield M."/>
            <person name="French L."/>
            <person name="Steward C.A."/>
            <person name="Sims S.K."/>
            <person name="Jones M.C."/>
            <person name="Searle S."/>
            <person name="Scott C."/>
            <person name="Howe K."/>
            <person name="Hunt S.E."/>
            <person name="Andrews T.D."/>
            <person name="Gilbert J.G.R."/>
            <person name="Swarbreck D."/>
            <person name="Ashurst J.L."/>
            <person name="Taylor A."/>
            <person name="Battles J."/>
            <person name="Bird C.P."/>
            <person name="Ainscough R."/>
            <person name="Almeida J.P."/>
            <person name="Ashwell R.I.S."/>
            <person name="Ambrose K.D."/>
            <person name="Babbage A.K."/>
            <person name="Bagguley C.L."/>
            <person name="Bailey J."/>
            <person name="Banerjee R."/>
            <person name="Bates K."/>
            <person name="Beasley H."/>
            <person name="Bray-Allen S."/>
            <person name="Brown A.J."/>
            <person name="Brown J.Y."/>
            <person name="Burford D.C."/>
            <person name="Burrill W."/>
            <person name="Burton J."/>
            <person name="Cahill P."/>
            <person name="Camire D."/>
            <person name="Carter N.P."/>
            <person name="Chapman J.C."/>
            <person name="Clark S.Y."/>
            <person name="Clarke G."/>
            <person name="Clee C.M."/>
            <person name="Clegg S."/>
            <person name="Corby N."/>
            <person name="Coulson A."/>
            <person name="Dhami P."/>
            <person name="Dutta I."/>
            <person name="Dunn M."/>
            <person name="Faulkner L."/>
            <person name="Frankish A."/>
            <person name="Frankland J.A."/>
            <person name="Garner P."/>
            <person name="Garnett J."/>
            <person name="Gribble S."/>
            <person name="Griffiths C."/>
            <person name="Grocock R."/>
            <person name="Gustafson E."/>
            <person name="Hammond S."/>
            <person name="Harley J.L."/>
            <person name="Hart E."/>
            <person name="Heath P.D."/>
            <person name="Ho T.P."/>
            <person name="Hopkins B."/>
            <person name="Horne J."/>
            <person name="Howden P.J."/>
            <person name="Huckle E."/>
            <person name="Hynds C."/>
            <person name="Johnson C."/>
            <person name="Johnson D."/>
            <person name="Kana A."/>
            <person name="Kay M."/>
            <person name="Kimberley A.M."/>
            <person name="Kershaw J.K."/>
            <person name="Kokkinaki M."/>
            <person name="Laird G.K."/>
            <person name="Lawlor S."/>
            <person name="Lee H.M."/>
            <person name="Leongamornlert D.A."/>
            <person name="Laird G."/>
            <person name="Lloyd C."/>
            <person name="Lloyd D.M."/>
            <person name="Loveland J."/>
            <person name="Lovell J."/>
            <person name="McLaren S."/>
            <person name="McLay K.E."/>
            <person name="McMurray A."/>
            <person name="Mashreghi-Mohammadi M."/>
            <person name="Matthews L."/>
            <person name="Milne S."/>
            <person name="Nickerson T."/>
            <person name="Nguyen M."/>
            <person name="Overton-Larty E."/>
            <person name="Palmer S.A."/>
            <person name="Pearce A.V."/>
            <person name="Peck A.I."/>
            <person name="Pelan S."/>
            <person name="Phillimore B."/>
            <person name="Porter K."/>
            <person name="Rice C.M."/>
            <person name="Rogosin A."/>
            <person name="Ross M.T."/>
            <person name="Sarafidou T."/>
            <person name="Sehra H.K."/>
            <person name="Shownkeen R."/>
            <person name="Skuce C.D."/>
            <person name="Smith M."/>
            <person name="Standring L."/>
            <person name="Sycamore N."/>
            <person name="Tester J."/>
            <person name="Thorpe A."/>
            <person name="Torcasso W."/>
            <person name="Tracey A."/>
            <person name="Tromans A."/>
            <person name="Tsolas J."/>
            <person name="Wall M."/>
            <person name="Walsh J."/>
            <person name="Wang H."/>
            <person name="Weinstock K."/>
            <person name="West A.P."/>
            <person name="Willey D.L."/>
            <person name="Whitehead S.L."/>
            <person name="Wilming L."/>
            <person name="Wray P.W."/>
            <person name="Young L."/>
            <person name="Chen Y."/>
            <person name="Lovering R.C."/>
            <person name="Moschonas N.K."/>
            <person name="Siebert R."/>
            <person name="Fechtel K."/>
            <person name="Bentley D."/>
            <person name="Durbin R.M."/>
            <person name="Hubbard T."/>
            <person name="Doucette-Stamm L."/>
            <person name="Beck S."/>
            <person name="Smith D.R."/>
            <person name="Rogers J."/>
        </authorList>
    </citation>
    <scope>NUCLEOTIDE SEQUENCE [LARGE SCALE GENOMIC DNA]</scope>
</reference>
<reference key="3">
    <citation type="journal article" date="2004" name="Genome Res.">
        <title>The status, quality, and expansion of the NIH full-length cDNA project: the Mammalian Gene Collection (MGC).</title>
        <authorList>
            <consortium name="The MGC Project Team"/>
        </authorList>
    </citation>
    <scope>NUCLEOTIDE SEQUENCE [LARGE SCALE MRNA] (ISOFORM 1)</scope>
    <scope>VARIANTS SER-68 AND ARG-243</scope>
    <source>
        <tissue>Brain</tissue>
    </source>
</reference>
<reference key="4">
    <citation type="journal article" date="2006" name="Science">
        <title>The consensus coding sequences of human breast and colorectal cancers.</title>
        <authorList>
            <person name="Sjoeblom T."/>
            <person name="Jones S."/>
            <person name="Wood L.D."/>
            <person name="Parsons D.W."/>
            <person name="Lin J."/>
            <person name="Barber T.D."/>
            <person name="Mandelker D."/>
            <person name="Leary R.J."/>
            <person name="Ptak J."/>
            <person name="Silliman N."/>
            <person name="Szabo S."/>
            <person name="Buckhaults P."/>
            <person name="Farrell C."/>
            <person name="Meeh P."/>
            <person name="Markowitz S.D."/>
            <person name="Willis J."/>
            <person name="Dawson D."/>
            <person name="Willson J.K.V."/>
            <person name="Gazdar A.F."/>
            <person name="Hartigan J."/>
            <person name="Wu L."/>
            <person name="Liu C."/>
            <person name="Parmigiani G."/>
            <person name="Park B.H."/>
            <person name="Bachman K.E."/>
            <person name="Papadopoulos N."/>
            <person name="Vogelstein B."/>
            <person name="Kinzler K.W."/>
            <person name="Velculescu V.E."/>
        </authorList>
    </citation>
    <scope>VARIANT [LARGE SCALE ANALYSIS] HIS-100</scope>
</reference>
<name>VSTM4_HUMAN</name>
<feature type="signal peptide" evidence="2">
    <location>
        <begin position="1"/>
        <end position="23"/>
    </location>
</feature>
<feature type="chain" id="PRO_0000274483" description="V-set and transmembrane domain-containing protein 4">
    <location>
        <begin position="24"/>
        <end position="320"/>
    </location>
</feature>
<feature type="peptide" id="PRO_0000431303" description="Peptide Lv" evidence="1">
    <location>
        <begin position="55"/>
        <end position="104"/>
    </location>
</feature>
<feature type="topological domain" description="Extracellular" evidence="2">
    <location>
        <begin position="24"/>
        <end position="180"/>
    </location>
</feature>
<feature type="transmembrane region" description="Helical" evidence="2">
    <location>
        <begin position="181"/>
        <end position="201"/>
    </location>
</feature>
<feature type="topological domain" description="Cytoplasmic" evidence="2">
    <location>
        <begin position="202"/>
        <end position="320"/>
    </location>
</feature>
<feature type="domain" description="Ig-like">
    <location>
        <begin position="24"/>
        <end position="155"/>
    </location>
</feature>
<feature type="glycosylation site" description="N-linked (GlcNAc...) asparagine" evidence="2">
    <location>
        <position position="25"/>
    </location>
</feature>
<feature type="glycosylation site" description="N-linked (GlcNAc...) asparagine" evidence="2">
    <location>
        <position position="41"/>
    </location>
</feature>
<feature type="glycosylation site" description="N-linked (GlcNAc...) asparagine" evidence="2">
    <location>
        <position position="89"/>
    </location>
</feature>
<feature type="glycosylation site" description="N-linked (GlcNAc...) asparagine" evidence="2">
    <location>
        <position position="144"/>
    </location>
</feature>
<feature type="disulfide bond" evidence="3">
    <location>
        <begin position="46"/>
        <end position="127"/>
    </location>
</feature>
<feature type="splice variant" id="VSP_022766" description="In isoform 2." evidence="7">
    <original>VISLKASEESSFEKTKETWAFFEDLYVYAVLVCCVGILS</original>
    <variation>GVSSHPVERGAFLGISLVILPHSLPFTADLTMASFLQSS</variation>
    <location>
        <begin position="153"/>
        <end position="191"/>
    </location>
</feature>
<feature type="splice variant" id="VSP_022767" description="In isoform 2." evidence="7">
    <location>
        <begin position="192"/>
        <end position="320"/>
    </location>
</feature>
<feature type="sequence variant" id="VAR_030291" description="In dbSNP:rs13088." evidence="4 5">
    <original>F</original>
    <variation>S</variation>
    <location>
        <position position="68"/>
    </location>
</feature>
<feature type="sequence variant" id="VAR_035539" description="In a colorectal cancer sample; somatic mutation; dbSNP:rs138454994." evidence="6">
    <original>R</original>
    <variation>H</variation>
    <location>
        <position position="100"/>
    </location>
</feature>
<feature type="sequence variant" id="VAR_065188" description="In dbSNP:rs17854124." evidence="5">
    <original>K</original>
    <variation>R</variation>
    <location>
        <position position="243"/>
    </location>
</feature>
<feature type="sequence conflict" description="In Ref. 1; BAG60248." evidence="8" ref="1">
    <original>F</original>
    <variation>S</variation>
    <location>
        <position position="195"/>
    </location>
</feature>
<keyword id="KW-0025">Alternative splicing</keyword>
<keyword id="KW-1003">Cell membrane</keyword>
<keyword id="KW-1015">Disulfide bond</keyword>
<keyword id="KW-0325">Glycoprotein</keyword>
<keyword id="KW-0393">Immunoglobulin domain</keyword>
<keyword id="KW-0472">Membrane</keyword>
<keyword id="KW-1267">Proteomics identification</keyword>
<keyword id="KW-1185">Reference proteome</keyword>
<keyword id="KW-0964">Secreted</keyword>
<keyword id="KW-0732">Signal</keyword>
<keyword id="KW-0812">Transmembrane</keyword>
<keyword id="KW-1133">Transmembrane helix</keyword>
<sequence length="320" mass="36146">MRLLALAAAALLARAPAPEVCAALNVTVSPGPVVDYLEGENATLLCHVSQKRRKDSLLAVRWFFAHSFDSQEALMVKMTKLRVVQYYGNFSRSAKRRRLRLLEEQRGALYRLSVLTLQPSDQGHYVCRVQEISRHRNKWTAWSNGSSATEMRVISLKASEESSFEKTKETWAFFEDLYVYAVLVCCVGILSILLFMLVIVWQSVFNKRKSRVRHYLVKCPQNSSGETVTSVTSLAPLQPKKGKRQKEKPDIPPAVPAKAPIAPTFHKPKLLKPQRKVTLPKIAEENLTYAELELIKPHRAAKGAPTSTVYAQILFEENKL</sequence>
<accession>Q8IW00</accession>
<accession>B4DNI6</accession>
<accession>Q96MX7</accession>
<proteinExistence type="evidence at protein level"/>
<comment type="function">
    <text evidence="1">Peptide Lv enhances L-type voltage-gated calcium channel (L-VGCC) currents in retinal photoreceptors.</text>
</comment>
<comment type="interaction">
    <interactant intactId="EBI-4311759">
        <id>Q8IW00</id>
    </interactant>
    <interactant intactId="EBI-3867333">
        <id>A8MQ03</id>
        <label>CYSRT1</label>
    </interactant>
    <organismsDiffer>false</organismsDiffer>
    <experiments>3</experiments>
</comment>
<comment type="interaction">
    <interactant intactId="EBI-4311759">
        <id>Q8IW00</id>
    </interactant>
    <interactant intactId="EBI-3918971">
        <id>Q9Y680</id>
        <label>FKBP7</label>
    </interactant>
    <organismsDiffer>false</organismsDiffer>
    <experiments>3</experiments>
</comment>
<comment type="interaction">
    <interactant intactId="EBI-4311759">
        <id>Q8IW00</id>
    </interactant>
    <interactant intactId="EBI-11959885">
        <id>Q07627</id>
        <label>KRTAP1-1</label>
    </interactant>
    <organismsDiffer>false</organismsDiffer>
    <experiments>3</experiments>
</comment>
<comment type="interaction">
    <interactant intactId="EBI-4311759">
        <id>Q8IW00</id>
    </interactant>
    <interactant intactId="EBI-11749135">
        <id>Q8IUG1</id>
        <label>KRTAP1-3</label>
    </interactant>
    <organismsDiffer>false</organismsDiffer>
    <experiments>3</experiments>
</comment>
<comment type="interaction">
    <interactant intactId="EBI-4311759">
        <id>Q8IW00</id>
    </interactant>
    <interactant intactId="EBI-11953334">
        <id>P60328</id>
        <label>KRTAP12-3</label>
    </interactant>
    <organismsDiffer>false</organismsDiffer>
    <experiments>3</experiments>
</comment>
<comment type="interaction">
    <interactant intactId="EBI-4311759">
        <id>Q8IW00</id>
    </interactant>
    <interactant intactId="EBI-22311199">
        <id>Q3LI67</id>
        <label>KRTAP6-3</label>
    </interactant>
    <organismsDiffer>false</organismsDiffer>
    <experiments>3</experiments>
</comment>
<comment type="interaction">
    <interactant intactId="EBI-4311759">
        <id>Q8IW00</id>
    </interactant>
    <interactant intactId="EBI-724076">
        <id>Q99750</id>
        <label>MDFI</label>
    </interactant>
    <organismsDiffer>false</organismsDiffer>
    <experiments>3</experiments>
</comment>
<comment type="interaction">
    <interactant intactId="EBI-4311759">
        <id>Q8IW00</id>
    </interactant>
    <interactant intactId="EBI-712466">
        <id>Q16623</id>
        <label>STX1A</label>
    </interactant>
    <organismsDiffer>false</organismsDiffer>
    <experiments>3</experiments>
</comment>
<comment type="interaction">
    <interactant intactId="EBI-4311759">
        <id>Q8IW00</id>
    </interactant>
    <interactant intactId="EBI-2562368">
        <id>P22735</id>
        <label>TGM1</label>
    </interactant>
    <organismsDiffer>false</organismsDiffer>
    <experiments>3</experiments>
</comment>
<comment type="subcellular location">
    <molecule>Peptide Lv</molecule>
    <subcellularLocation>
        <location evidence="1">Secreted</location>
    </subcellularLocation>
</comment>
<comment type="subcellular location">
    <subcellularLocation>
        <location evidence="8">Cell membrane</location>
        <topology evidence="8">Single-pass type I membrane protein</topology>
    </subcellularLocation>
</comment>
<comment type="alternative products">
    <event type="alternative splicing"/>
    <isoform>
        <id>Q8IW00-1</id>
        <name>1</name>
        <sequence type="displayed"/>
    </isoform>
    <isoform>
        <id>Q8IW00-2</id>
        <name>2</name>
        <sequence type="described" ref="VSP_022766 VSP_022767"/>
    </isoform>
</comment>
<comment type="PTM">
    <text evidence="6">Proteolytically cleaved to generate a bioactive peptide.</text>
</comment>
<protein>
    <recommendedName>
        <fullName>V-set and transmembrane domain-containing protein 4</fullName>
    </recommendedName>
    <component>
        <recommendedName>
            <fullName>Peptide Lv</fullName>
        </recommendedName>
    </component>
</protein>
<evidence type="ECO:0000250" key="1">
    <source>
        <dbReference type="UniProtKB" id="T1NXB5"/>
    </source>
</evidence>
<evidence type="ECO:0000255" key="2"/>
<evidence type="ECO:0000255" key="3">
    <source>
        <dbReference type="PROSITE-ProRule" id="PRU00114"/>
    </source>
</evidence>
<evidence type="ECO:0000269" key="4">
    <source>
    </source>
</evidence>
<evidence type="ECO:0000269" key="5">
    <source>
    </source>
</evidence>
<evidence type="ECO:0000269" key="6">
    <source>
    </source>
</evidence>
<evidence type="ECO:0000303" key="7">
    <source>
    </source>
</evidence>
<evidence type="ECO:0000305" key="8"/>
<organism>
    <name type="scientific">Homo sapiens</name>
    <name type="common">Human</name>
    <dbReference type="NCBI Taxonomy" id="9606"/>
    <lineage>
        <taxon>Eukaryota</taxon>
        <taxon>Metazoa</taxon>
        <taxon>Chordata</taxon>
        <taxon>Craniata</taxon>
        <taxon>Vertebrata</taxon>
        <taxon>Euteleostomi</taxon>
        <taxon>Mammalia</taxon>
        <taxon>Eutheria</taxon>
        <taxon>Euarchontoglires</taxon>
        <taxon>Primates</taxon>
        <taxon>Haplorrhini</taxon>
        <taxon>Catarrhini</taxon>
        <taxon>Hominidae</taxon>
        <taxon>Homo</taxon>
    </lineage>
</organism>